<comment type="function">
    <text evidence="1">Catalyzes the formation of phosphatidylethanolamine (PtdEtn) from phosphatidylserine (PtdSer).</text>
</comment>
<comment type="catalytic activity">
    <reaction evidence="1">
        <text>a 1,2-diacyl-sn-glycero-3-phospho-L-serine + H(+) = a 1,2-diacyl-sn-glycero-3-phosphoethanolamine + CO2</text>
        <dbReference type="Rhea" id="RHEA:20828"/>
        <dbReference type="ChEBI" id="CHEBI:15378"/>
        <dbReference type="ChEBI" id="CHEBI:16526"/>
        <dbReference type="ChEBI" id="CHEBI:57262"/>
        <dbReference type="ChEBI" id="CHEBI:64612"/>
        <dbReference type="EC" id="4.1.1.65"/>
    </reaction>
</comment>
<comment type="cofactor">
    <cofactor evidence="1">
        <name>pyruvate</name>
        <dbReference type="ChEBI" id="CHEBI:15361"/>
    </cofactor>
    <text evidence="1">Binds 1 pyruvoyl group covalently per subunit.</text>
</comment>
<comment type="pathway">
    <text evidence="1">Phospholipid metabolism; phosphatidylethanolamine biosynthesis; phosphatidylethanolamine from CDP-diacylglycerol: step 2/2.</text>
</comment>
<comment type="subunit">
    <text evidence="1">Heterodimer of a large membrane-associated beta subunit and a small pyruvoyl-containing alpha subunit.</text>
</comment>
<comment type="subcellular location">
    <subcellularLocation>
        <location evidence="1">Cell membrane</location>
        <topology evidence="1">Peripheral membrane protein</topology>
    </subcellularLocation>
</comment>
<comment type="PTM">
    <text evidence="1">Is synthesized initially as an inactive proenzyme. Formation of the active enzyme involves a self-maturation process in which the active site pyruvoyl group is generated from an internal serine residue via an autocatalytic post-translational modification. Two non-identical subunits are generated from the proenzyme in this reaction, and the pyruvate is formed at the N-terminus of the alpha chain, which is derived from the carboxyl end of the proenzyme. The autoendoproteolytic cleavage occurs by a canonical serine protease mechanism, in which the side chain hydroxyl group of the serine supplies its oxygen atom to form the C-terminus of the beta chain, while the remainder of the serine residue undergoes an oxidative deamination to produce ammonia and the pyruvoyl prosthetic group on the alpha chain. During this reaction, the Ser that is part of the protease active site of the proenzyme becomes the pyruvoyl prosthetic group, which constitutes an essential element of the active site of the mature decarboxylase.</text>
</comment>
<comment type="similarity">
    <text evidence="1">Belongs to the phosphatidylserine decarboxylase family. PSD-B subfamily. Prokaryotic type I sub-subfamily.</text>
</comment>
<dbReference type="EC" id="4.1.1.65" evidence="1"/>
<dbReference type="EMBL" id="CP000266">
    <property type="protein sequence ID" value="ABF06296.1"/>
    <property type="molecule type" value="Genomic_DNA"/>
</dbReference>
<dbReference type="SMR" id="Q0SXB9"/>
<dbReference type="KEGG" id="sfv:SFV_4317"/>
<dbReference type="HOGENOM" id="CLU_029061_4_1_6"/>
<dbReference type="UniPathway" id="UPA00558">
    <property type="reaction ID" value="UER00616"/>
</dbReference>
<dbReference type="Proteomes" id="UP000000659">
    <property type="component" value="Chromosome"/>
</dbReference>
<dbReference type="GO" id="GO:0005886">
    <property type="term" value="C:plasma membrane"/>
    <property type="evidence" value="ECO:0007669"/>
    <property type="project" value="UniProtKB-SubCell"/>
</dbReference>
<dbReference type="GO" id="GO:0004609">
    <property type="term" value="F:phosphatidylserine decarboxylase activity"/>
    <property type="evidence" value="ECO:0007669"/>
    <property type="project" value="UniProtKB-UniRule"/>
</dbReference>
<dbReference type="GO" id="GO:0006646">
    <property type="term" value="P:phosphatidylethanolamine biosynthetic process"/>
    <property type="evidence" value="ECO:0007669"/>
    <property type="project" value="UniProtKB-UniRule"/>
</dbReference>
<dbReference type="HAMAP" id="MF_00662">
    <property type="entry name" value="PS_decarb_PSD_B_type1"/>
    <property type="match status" value="1"/>
</dbReference>
<dbReference type="InterPro" id="IPR003817">
    <property type="entry name" value="PS_Dcarbxylase"/>
</dbReference>
<dbReference type="InterPro" id="IPR033177">
    <property type="entry name" value="PSD-B"/>
</dbReference>
<dbReference type="InterPro" id="IPR033178">
    <property type="entry name" value="PSD_type1_pro"/>
</dbReference>
<dbReference type="NCBIfam" id="TIGR00163">
    <property type="entry name" value="PS_decarb"/>
    <property type="match status" value="1"/>
</dbReference>
<dbReference type="PANTHER" id="PTHR10067">
    <property type="entry name" value="PHOSPHATIDYLSERINE DECARBOXYLASE"/>
    <property type="match status" value="1"/>
</dbReference>
<dbReference type="PANTHER" id="PTHR10067:SF6">
    <property type="entry name" value="PHOSPHATIDYLSERINE DECARBOXYLASE PROENZYME, MITOCHONDRIAL"/>
    <property type="match status" value="1"/>
</dbReference>
<dbReference type="Pfam" id="PF02666">
    <property type="entry name" value="PS_Dcarbxylase"/>
    <property type="match status" value="1"/>
</dbReference>
<reference key="1">
    <citation type="journal article" date="2006" name="BMC Genomics">
        <title>Complete genome sequence of Shigella flexneri 5b and comparison with Shigella flexneri 2a.</title>
        <authorList>
            <person name="Nie H."/>
            <person name="Yang F."/>
            <person name="Zhang X."/>
            <person name="Yang J."/>
            <person name="Chen L."/>
            <person name="Wang J."/>
            <person name="Xiong Z."/>
            <person name="Peng J."/>
            <person name="Sun L."/>
            <person name="Dong J."/>
            <person name="Xue Y."/>
            <person name="Xu X."/>
            <person name="Chen S."/>
            <person name="Yao Z."/>
            <person name="Shen Y."/>
            <person name="Jin Q."/>
        </authorList>
    </citation>
    <scope>NUCLEOTIDE SEQUENCE [LARGE SCALE GENOMIC DNA]</scope>
    <source>
        <strain>8401</strain>
    </source>
</reference>
<sequence length="322" mass="35934">MLNSFKLSLQYILPKLWLTRLAGWGASKRAGWLTKLVIDLFVKYYKVDMKEAQKPDTASYRTFNEFFVRPLRDEVRPIDTDPNVLVMPADGVISQLGKIEEDKILQAKGHNYSLEALLAGNYLMADLFRNGTFVTTYLSPRDYHRVHMPCNGILREMIYVPGDLFSVNHLTAQNVPNLFARNERVICLFDTEFGPMAQILVGATIVGSIETVWAGTITPPREGIIKRWTWPAGENDGSVALLKGQEMGRFKLGSTVINLFAPGKVNLVEQLESLSVTKIGQPLAVSTETFVTPDAEPAPLPAEEIEAEHDASPLVDDKKDQV</sequence>
<name>PSD_SHIF8</name>
<proteinExistence type="inferred from homology"/>
<accession>Q0SXB9</accession>
<organism>
    <name type="scientific">Shigella flexneri serotype 5b (strain 8401)</name>
    <dbReference type="NCBI Taxonomy" id="373384"/>
    <lineage>
        <taxon>Bacteria</taxon>
        <taxon>Pseudomonadati</taxon>
        <taxon>Pseudomonadota</taxon>
        <taxon>Gammaproteobacteria</taxon>
        <taxon>Enterobacterales</taxon>
        <taxon>Enterobacteriaceae</taxon>
        <taxon>Shigella</taxon>
    </lineage>
</organism>
<keyword id="KW-1003">Cell membrane</keyword>
<keyword id="KW-0210">Decarboxylase</keyword>
<keyword id="KW-0444">Lipid biosynthesis</keyword>
<keyword id="KW-0443">Lipid metabolism</keyword>
<keyword id="KW-0456">Lyase</keyword>
<keyword id="KW-0472">Membrane</keyword>
<keyword id="KW-0594">Phospholipid biosynthesis</keyword>
<keyword id="KW-1208">Phospholipid metabolism</keyword>
<keyword id="KW-0670">Pyruvate</keyword>
<keyword id="KW-0865">Zymogen</keyword>
<gene>
    <name evidence="1" type="primary">psd</name>
    <name type="ordered locus">SFV_4317</name>
</gene>
<evidence type="ECO:0000255" key="1">
    <source>
        <dbReference type="HAMAP-Rule" id="MF_00662"/>
    </source>
</evidence>
<evidence type="ECO:0000256" key="2">
    <source>
        <dbReference type="SAM" id="MobiDB-lite"/>
    </source>
</evidence>
<feature type="chain" id="PRO_1000026592" description="Phosphatidylserine decarboxylase beta chain" evidence="1">
    <location>
        <begin position="1"/>
        <end position="253"/>
    </location>
</feature>
<feature type="chain" id="PRO_1000026593" description="Phosphatidylserine decarboxylase alpha chain" evidence="1">
    <location>
        <begin position="254"/>
        <end position="322"/>
    </location>
</feature>
<feature type="region of interest" description="Disordered" evidence="2">
    <location>
        <begin position="293"/>
        <end position="322"/>
    </location>
</feature>
<feature type="compositionally biased region" description="Basic and acidic residues" evidence="2">
    <location>
        <begin position="308"/>
        <end position="322"/>
    </location>
</feature>
<feature type="active site" description="Charge relay system; for autoendoproteolytic cleavage activity" evidence="1">
    <location>
        <position position="90"/>
    </location>
</feature>
<feature type="active site" description="Charge relay system; for autoendoproteolytic cleavage activity" evidence="1">
    <location>
        <position position="147"/>
    </location>
</feature>
<feature type="active site" description="Charge relay system; for autoendoproteolytic cleavage activity" evidence="1">
    <location>
        <position position="254"/>
    </location>
</feature>
<feature type="active site" description="Schiff-base intermediate with substrate; via pyruvic acid; for decarboxylase activity" evidence="1">
    <location>
        <position position="254"/>
    </location>
</feature>
<feature type="site" description="Cleavage (non-hydrolytic); by autocatalysis" evidence="1">
    <location>
        <begin position="253"/>
        <end position="254"/>
    </location>
</feature>
<feature type="modified residue" description="Pyruvic acid (Ser); by autocatalysis" evidence="1">
    <location>
        <position position="254"/>
    </location>
</feature>
<protein>
    <recommendedName>
        <fullName evidence="1">Phosphatidylserine decarboxylase proenzyme</fullName>
        <ecNumber evidence="1">4.1.1.65</ecNumber>
    </recommendedName>
    <component>
        <recommendedName>
            <fullName evidence="1">Phosphatidylserine decarboxylase alpha chain</fullName>
        </recommendedName>
    </component>
    <component>
        <recommendedName>
            <fullName evidence="1">Phosphatidylserine decarboxylase beta chain</fullName>
        </recommendedName>
    </component>
</protein>